<gene>
    <name evidence="1" type="primary">hldE</name>
    <name type="ordered locus">AHA_3767</name>
</gene>
<evidence type="ECO:0000255" key="1">
    <source>
        <dbReference type="HAMAP-Rule" id="MF_01603"/>
    </source>
</evidence>
<sequence length="475" mass="50743">MKITLPEFEKARVLVVGDVMLDRYWHGPTGRISPEAPVPVVKVEHIEERPGGAANVALNSAALGAHAVLLGLTGQDEAADALAGQMAGVKVACDFVRLADYPTITKLRVLSRNQQLLRLDFEEAFHDVDSTLLMGKVEQALPHSDVMILSDYGKGALNDVPSMIQRARAAGIPVLVDPKGTDFEKYRGATLLTPNMSEFEAVVGKVKSEEELVAKGLELVKRFELEALLVTRSENGMTLIREGQPELHLPAQAHEVYDVTGAGDTVISTLATSLAAGKSLDEACALANTAAGIVVGKLGTSTVSPVELANALYTEQETGFGVMSEAQLKIAVQAARLRGEKVVMTNGCFDILHAGHVSYLANAGKLGDRLIVAVNTDESVRRLKGPGRPVNPTERRMAVLAALGAVDWVVPFAEDTPQRLIAEVLPDLLVKGGDYKPEEIAGYAEVTANGGEVRVLNFEDGCSTSDIIKTIRERG</sequence>
<organism>
    <name type="scientific">Aeromonas hydrophila subsp. hydrophila (strain ATCC 7966 / DSM 30187 / BCRC 13018 / CCUG 14551 / JCM 1027 / KCTC 2358 / NCIMB 9240 / NCTC 8049)</name>
    <dbReference type="NCBI Taxonomy" id="380703"/>
    <lineage>
        <taxon>Bacteria</taxon>
        <taxon>Pseudomonadati</taxon>
        <taxon>Pseudomonadota</taxon>
        <taxon>Gammaproteobacteria</taxon>
        <taxon>Aeromonadales</taxon>
        <taxon>Aeromonadaceae</taxon>
        <taxon>Aeromonas</taxon>
    </lineage>
</organism>
<proteinExistence type="inferred from homology"/>
<comment type="function">
    <text evidence="1">Catalyzes the phosphorylation of D-glycero-D-manno-heptose 7-phosphate at the C-1 position to selectively form D-glycero-beta-D-manno-heptose-1,7-bisphosphate.</text>
</comment>
<comment type="function">
    <text evidence="1">Catalyzes the ADP transfer from ATP to D-glycero-beta-D-manno-heptose 1-phosphate, yielding ADP-D-glycero-beta-D-manno-heptose.</text>
</comment>
<comment type="catalytic activity">
    <reaction evidence="1">
        <text>D-glycero-beta-D-manno-heptose 7-phosphate + ATP = D-glycero-beta-D-manno-heptose 1,7-bisphosphate + ADP + H(+)</text>
        <dbReference type="Rhea" id="RHEA:27473"/>
        <dbReference type="ChEBI" id="CHEBI:15378"/>
        <dbReference type="ChEBI" id="CHEBI:30616"/>
        <dbReference type="ChEBI" id="CHEBI:60204"/>
        <dbReference type="ChEBI" id="CHEBI:60208"/>
        <dbReference type="ChEBI" id="CHEBI:456216"/>
        <dbReference type="EC" id="2.7.1.167"/>
    </reaction>
</comment>
<comment type="catalytic activity">
    <reaction evidence="1">
        <text>D-glycero-beta-D-manno-heptose 1-phosphate + ATP + H(+) = ADP-D-glycero-beta-D-manno-heptose + diphosphate</text>
        <dbReference type="Rhea" id="RHEA:27465"/>
        <dbReference type="ChEBI" id="CHEBI:15378"/>
        <dbReference type="ChEBI" id="CHEBI:30616"/>
        <dbReference type="ChEBI" id="CHEBI:33019"/>
        <dbReference type="ChEBI" id="CHEBI:59967"/>
        <dbReference type="ChEBI" id="CHEBI:61593"/>
        <dbReference type="EC" id="2.7.7.70"/>
    </reaction>
</comment>
<comment type="pathway">
    <text evidence="1">Nucleotide-sugar biosynthesis; ADP-L-glycero-beta-D-manno-heptose biosynthesis; ADP-L-glycero-beta-D-manno-heptose from D-glycero-beta-D-manno-heptose 7-phosphate: step 1/4.</text>
</comment>
<comment type="pathway">
    <text evidence="1">Nucleotide-sugar biosynthesis; ADP-L-glycero-beta-D-manno-heptose biosynthesis; ADP-L-glycero-beta-D-manno-heptose from D-glycero-beta-D-manno-heptose 7-phosphate: step 3/4.</text>
</comment>
<comment type="subunit">
    <text evidence="1">Homodimer.</text>
</comment>
<comment type="similarity">
    <text evidence="1">In the N-terminal section; belongs to the carbohydrate kinase PfkB family.</text>
</comment>
<comment type="similarity">
    <text evidence="1">In the C-terminal section; belongs to the cytidylyltransferase family.</text>
</comment>
<dbReference type="EC" id="2.7.1.167" evidence="1"/>
<dbReference type="EC" id="2.7.7.70" evidence="1"/>
<dbReference type="EMBL" id="CP000462">
    <property type="protein sequence ID" value="ABK36416.1"/>
    <property type="molecule type" value="Genomic_DNA"/>
</dbReference>
<dbReference type="RefSeq" id="WP_011707478.1">
    <property type="nucleotide sequence ID" value="NC_008570.1"/>
</dbReference>
<dbReference type="RefSeq" id="YP_858215.1">
    <property type="nucleotide sequence ID" value="NC_008570.1"/>
</dbReference>
<dbReference type="SMR" id="A0KPL4"/>
<dbReference type="STRING" id="380703.AHA_3767"/>
<dbReference type="EnsemblBacteria" id="ABK36416">
    <property type="protein sequence ID" value="ABK36416"/>
    <property type="gene ID" value="AHA_3767"/>
</dbReference>
<dbReference type="GeneID" id="4489633"/>
<dbReference type="KEGG" id="aha:AHA_3767"/>
<dbReference type="PATRIC" id="fig|380703.7.peg.3739"/>
<dbReference type="eggNOG" id="COG0615">
    <property type="taxonomic scope" value="Bacteria"/>
</dbReference>
<dbReference type="eggNOG" id="COG2870">
    <property type="taxonomic scope" value="Bacteria"/>
</dbReference>
<dbReference type="HOGENOM" id="CLU_021150_2_1_6"/>
<dbReference type="OrthoDB" id="9802794at2"/>
<dbReference type="UniPathway" id="UPA00356">
    <property type="reaction ID" value="UER00437"/>
</dbReference>
<dbReference type="UniPathway" id="UPA00356">
    <property type="reaction ID" value="UER00439"/>
</dbReference>
<dbReference type="Proteomes" id="UP000000756">
    <property type="component" value="Chromosome"/>
</dbReference>
<dbReference type="GO" id="GO:0005829">
    <property type="term" value="C:cytosol"/>
    <property type="evidence" value="ECO:0007669"/>
    <property type="project" value="TreeGrafter"/>
</dbReference>
<dbReference type="GO" id="GO:0005524">
    <property type="term" value="F:ATP binding"/>
    <property type="evidence" value="ECO:0007669"/>
    <property type="project" value="UniProtKB-UniRule"/>
</dbReference>
<dbReference type="GO" id="GO:0033785">
    <property type="term" value="F:heptose 7-phosphate kinase activity"/>
    <property type="evidence" value="ECO:0007669"/>
    <property type="project" value="UniProtKB-UniRule"/>
</dbReference>
<dbReference type="GO" id="GO:0033786">
    <property type="term" value="F:heptose-1-phosphate adenylyltransferase activity"/>
    <property type="evidence" value="ECO:0007669"/>
    <property type="project" value="UniProtKB-UniRule"/>
</dbReference>
<dbReference type="GO" id="GO:0016773">
    <property type="term" value="F:phosphotransferase activity, alcohol group as acceptor"/>
    <property type="evidence" value="ECO:0007669"/>
    <property type="project" value="InterPro"/>
</dbReference>
<dbReference type="GO" id="GO:0097171">
    <property type="term" value="P:ADP-L-glycero-beta-D-manno-heptose biosynthetic process"/>
    <property type="evidence" value="ECO:0007669"/>
    <property type="project" value="UniProtKB-UniPathway"/>
</dbReference>
<dbReference type="CDD" id="cd01172">
    <property type="entry name" value="RfaE_like"/>
    <property type="match status" value="1"/>
</dbReference>
<dbReference type="FunFam" id="3.40.1190.20:FF:000002">
    <property type="entry name" value="Bifunctional protein HldE"/>
    <property type="match status" value="1"/>
</dbReference>
<dbReference type="FunFam" id="3.40.50.620:FF:000028">
    <property type="entry name" value="Bifunctional protein HldE"/>
    <property type="match status" value="1"/>
</dbReference>
<dbReference type="Gene3D" id="3.40.1190.20">
    <property type="match status" value="1"/>
</dbReference>
<dbReference type="Gene3D" id="3.40.50.620">
    <property type="entry name" value="HUPs"/>
    <property type="match status" value="1"/>
</dbReference>
<dbReference type="HAMAP" id="MF_01603">
    <property type="entry name" value="HldE"/>
    <property type="match status" value="1"/>
</dbReference>
<dbReference type="InterPro" id="IPR023030">
    <property type="entry name" value="Bifunc_HldE"/>
</dbReference>
<dbReference type="InterPro" id="IPR002173">
    <property type="entry name" value="Carboh/pur_kinase_PfkB_CS"/>
</dbReference>
<dbReference type="InterPro" id="IPR004821">
    <property type="entry name" value="Cyt_trans-like"/>
</dbReference>
<dbReference type="InterPro" id="IPR011611">
    <property type="entry name" value="PfkB_dom"/>
</dbReference>
<dbReference type="InterPro" id="IPR011913">
    <property type="entry name" value="RfaE_dom_I"/>
</dbReference>
<dbReference type="InterPro" id="IPR011914">
    <property type="entry name" value="RfaE_dom_II"/>
</dbReference>
<dbReference type="InterPro" id="IPR029056">
    <property type="entry name" value="Ribokinase-like"/>
</dbReference>
<dbReference type="InterPro" id="IPR014729">
    <property type="entry name" value="Rossmann-like_a/b/a_fold"/>
</dbReference>
<dbReference type="NCBIfam" id="TIGR00125">
    <property type="entry name" value="cyt_tran_rel"/>
    <property type="match status" value="1"/>
</dbReference>
<dbReference type="NCBIfam" id="NF008454">
    <property type="entry name" value="PRK11316.1"/>
    <property type="match status" value="1"/>
</dbReference>
<dbReference type="NCBIfam" id="TIGR02198">
    <property type="entry name" value="rfaE_dom_I"/>
    <property type="match status" value="1"/>
</dbReference>
<dbReference type="NCBIfam" id="TIGR02199">
    <property type="entry name" value="rfaE_dom_II"/>
    <property type="match status" value="1"/>
</dbReference>
<dbReference type="PANTHER" id="PTHR46969">
    <property type="entry name" value="BIFUNCTIONAL PROTEIN HLDE"/>
    <property type="match status" value="1"/>
</dbReference>
<dbReference type="PANTHER" id="PTHR46969:SF1">
    <property type="entry name" value="BIFUNCTIONAL PROTEIN HLDE"/>
    <property type="match status" value="1"/>
</dbReference>
<dbReference type="Pfam" id="PF01467">
    <property type="entry name" value="CTP_transf_like"/>
    <property type="match status" value="1"/>
</dbReference>
<dbReference type="Pfam" id="PF00294">
    <property type="entry name" value="PfkB"/>
    <property type="match status" value="1"/>
</dbReference>
<dbReference type="SUPFAM" id="SSF52374">
    <property type="entry name" value="Nucleotidylyl transferase"/>
    <property type="match status" value="1"/>
</dbReference>
<dbReference type="SUPFAM" id="SSF53613">
    <property type="entry name" value="Ribokinase-like"/>
    <property type="match status" value="1"/>
</dbReference>
<dbReference type="PROSITE" id="PS00583">
    <property type="entry name" value="PFKB_KINASES_1"/>
    <property type="match status" value="1"/>
</dbReference>
<accession>A0KPL4</accession>
<keyword id="KW-0067">ATP-binding</keyword>
<keyword id="KW-0119">Carbohydrate metabolism</keyword>
<keyword id="KW-0418">Kinase</keyword>
<keyword id="KW-0511">Multifunctional enzyme</keyword>
<keyword id="KW-0547">Nucleotide-binding</keyword>
<keyword id="KW-0548">Nucleotidyltransferase</keyword>
<keyword id="KW-1185">Reference proteome</keyword>
<keyword id="KW-0808">Transferase</keyword>
<feature type="chain" id="PRO_0000291667" description="Bifunctional protein HldE">
    <location>
        <begin position="1"/>
        <end position="475"/>
    </location>
</feature>
<feature type="region of interest" description="Ribokinase">
    <location>
        <begin position="1"/>
        <end position="318"/>
    </location>
</feature>
<feature type="region of interest" description="Cytidylyltransferase">
    <location>
        <begin position="344"/>
        <end position="475"/>
    </location>
</feature>
<feature type="active site" evidence="1">
    <location>
        <position position="264"/>
    </location>
</feature>
<feature type="binding site" evidence="1">
    <location>
        <begin position="195"/>
        <end position="198"/>
    </location>
    <ligand>
        <name>ATP</name>
        <dbReference type="ChEBI" id="CHEBI:30616"/>
    </ligand>
</feature>
<protein>
    <recommendedName>
        <fullName evidence="1">Bifunctional protein HldE</fullName>
    </recommendedName>
    <domain>
        <recommendedName>
            <fullName evidence="1">D-beta-D-heptose 7-phosphate kinase</fullName>
            <ecNumber evidence="1">2.7.1.167</ecNumber>
        </recommendedName>
        <alternativeName>
            <fullName evidence="1">D-beta-D-heptose 7-phosphotransferase</fullName>
        </alternativeName>
        <alternativeName>
            <fullName evidence="1">D-glycero-beta-D-manno-heptose-7-phosphate kinase</fullName>
        </alternativeName>
    </domain>
    <domain>
        <recommendedName>
            <fullName evidence="1">D-beta-D-heptose 1-phosphate adenylyltransferase</fullName>
            <ecNumber evidence="1">2.7.7.70</ecNumber>
        </recommendedName>
        <alternativeName>
            <fullName evidence="1">D-glycero-beta-D-manno-heptose 1-phosphate adenylyltransferase</fullName>
        </alternativeName>
    </domain>
</protein>
<name>HLDE_AERHH</name>
<reference key="1">
    <citation type="journal article" date="2006" name="J. Bacteriol.">
        <title>Genome sequence of Aeromonas hydrophila ATCC 7966T: jack of all trades.</title>
        <authorList>
            <person name="Seshadri R."/>
            <person name="Joseph S.W."/>
            <person name="Chopra A.K."/>
            <person name="Sha J."/>
            <person name="Shaw J."/>
            <person name="Graf J."/>
            <person name="Haft D.H."/>
            <person name="Wu M."/>
            <person name="Ren Q."/>
            <person name="Rosovitz M.J."/>
            <person name="Madupu R."/>
            <person name="Tallon L."/>
            <person name="Kim M."/>
            <person name="Jin S."/>
            <person name="Vuong H."/>
            <person name="Stine O.C."/>
            <person name="Ali A."/>
            <person name="Horneman A.J."/>
            <person name="Heidelberg J.F."/>
        </authorList>
    </citation>
    <scope>NUCLEOTIDE SEQUENCE [LARGE SCALE GENOMIC DNA]</scope>
    <source>
        <strain>ATCC 7966 / DSM 30187 / BCRC 13018 / CCUG 14551 / JCM 1027 / KCTC 2358 / NCIMB 9240 / NCTC 8049</strain>
    </source>
</reference>